<keyword id="KW-0072">Autophagy</keyword>
<keyword id="KW-0968">Cytoplasmic vesicle</keyword>
<keyword id="KW-0446">Lipid-binding</keyword>
<keyword id="KW-0458">Lysosome</keyword>
<keyword id="KW-0472">Membrane</keyword>
<keyword id="KW-0597">Phosphoprotein</keyword>
<keyword id="KW-1185">Reference proteome</keyword>
<keyword id="KW-0677">Repeat</keyword>
<proteinExistence type="evidence at transcript level"/>
<dbReference type="EMBL" id="BC103478">
    <property type="protein sequence ID" value="AAI03479.1"/>
    <property type="molecule type" value="mRNA"/>
</dbReference>
<dbReference type="RefSeq" id="NP_001032268.1">
    <property type="nucleotide sequence ID" value="NM_001037191.1"/>
</dbReference>
<dbReference type="RefSeq" id="XP_017453805.1">
    <property type="nucleotide sequence ID" value="XM_017598316.3"/>
</dbReference>
<dbReference type="SMR" id="Q3ZBA0"/>
<dbReference type="FunCoup" id="Q3ZBA0">
    <property type="interactions" value="2350"/>
</dbReference>
<dbReference type="STRING" id="10116.ENSRNOP00000001347"/>
<dbReference type="GlyGen" id="Q3ZBA0">
    <property type="glycosylation" value="2 sites"/>
</dbReference>
<dbReference type="iPTMnet" id="Q3ZBA0"/>
<dbReference type="PhosphoSitePlus" id="Q3ZBA0"/>
<dbReference type="PaxDb" id="10116-ENSRNOP00000001347"/>
<dbReference type="Ensembl" id="ENSRNOT00000001347.8">
    <property type="protein sequence ID" value="ENSRNOP00000001347.5"/>
    <property type="gene ID" value="ENSRNOG00000001010.8"/>
</dbReference>
<dbReference type="GeneID" id="304285"/>
<dbReference type="KEGG" id="rno:304285"/>
<dbReference type="AGR" id="RGD:1306873"/>
<dbReference type="CTD" id="25851"/>
<dbReference type="RGD" id="1306873">
    <property type="gene designation" value="Tecpr1"/>
</dbReference>
<dbReference type="eggNOG" id="KOG3669">
    <property type="taxonomic scope" value="Eukaryota"/>
</dbReference>
<dbReference type="GeneTree" id="ENSGT00510000047886"/>
<dbReference type="HOGENOM" id="CLU_008303_0_0_1"/>
<dbReference type="InParanoid" id="Q3ZBA0"/>
<dbReference type="OMA" id="CPMQISR"/>
<dbReference type="OrthoDB" id="72441at2759"/>
<dbReference type="PhylomeDB" id="Q3ZBA0"/>
<dbReference type="TreeFam" id="TF323648"/>
<dbReference type="PRO" id="PR:Q3ZBA0"/>
<dbReference type="Proteomes" id="UP000002494">
    <property type="component" value="Chromosome 12"/>
</dbReference>
<dbReference type="Bgee" id="ENSRNOG00000001010">
    <property type="expression patterns" value="Expressed in frontal cortex and 20 other cell types or tissues"/>
</dbReference>
<dbReference type="GO" id="GO:0000421">
    <property type="term" value="C:autophagosome membrane"/>
    <property type="evidence" value="ECO:0000250"/>
    <property type="project" value="UniProtKB"/>
</dbReference>
<dbReference type="GO" id="GO:0031410">
    <property type="term" value="C:cytoplasmic vesicle"/>
    <property type="evidence" value="ECO:0007669"/>
    <property type="project" value="UniProtKB-KW"/>
</dbReference>
<dbReference type="GO" id="GO:0005765">
    <property type="term" value="C:lysosomal membrane"/>
    <property type="evidence" value="ECO:0000250"/>
    <property type="project" value="UniProtKB"/>
</dbReference>
<dbReference type="GO" id="GO:0005654">
    <property type="term" value="C:nucleoplasm"/>
    <property type="evidence" value="ECO:0007669"/>
    <property type="project" value="Ensembl"/>
</dbReference>
<dbReference type="GO" id="GO:0032266">
    <property type="term" value="F:phosphatidylinositol-3-phosphate binding"/>
    <property type="evidence" value="ECO:0000250"/>
    <property type="project" value="UniProtKB"/>
</dbReference>
<dbReference type="GO" id="GO:0097352">
    <property type="term" value="P:autophagosome maturation"/>
    <property type="evidence" value="ECO:0000250"/>
    <property type="project" value="UniProtKB"/>
</dbReference>
<dbReference type="GO" id="GO:0006914">
    <property type="term" value="P:autophagy"/>
    <property type="evidence" value="ECO:0000250"/>
    <property type="project" value="UniProtKB"/>
</dbReference>
<dbReference type="GO" id="GO:0016236">
    <property type="term" value="P:macroautophagy"/>
    <property type="evidence" value="ECO:0000266"/>
    <property type="project" value="RGD"/>
</dbReference>
<dbReference type="GO" id="GO:1901096">
    <property type="term" value="P:regulation of autophagosome maturation"/>
    <property type="evidence" value="ECO:0000266"/>
    <property type="project" value="RGD"/>
</dbReference>
<dbReference type="CDD" id="cd13300">
    <property type="entry name" value="PH1_TECPR1"/>
    <property type="match status" value="1"/>
</dbReference>
<dbReference type="FunFam" id="2.30.29.30:FF:000690">
    <property type="entry name" value="Tectonin beta-propeller repeat-containing protein 1"/>
    <property type="match status" value="1"/>
</dbReference>
<dbReference type="Gene3D" id="2.30.29.30">
    <property type="entry name" value="Pleckstrin-homology domain (PH domain)/Phosphotyrosine-binding domain (PTB)"/>
    <property type="match status" value="1"/>
</dbReference>
<dbReference type="InterPro" id="IPR006624">
    <property type="entry name" value="Beta-propeller_rpt_TECPR"/>
</dbReference>
<dbReference type="InterPro" id="IPR006614">
    <property type="entry name" value="Peroxin/Ferlin"/>
</dbReference>
<dbReference type="InterPro" id="IPR011993">
    <property type="entry name" value="PH-like_dom_sf"/>
</dbReference>
<dbReference type="InterPro" id="IPR010482">
    <property type="entry name" value="TECPR1-like_DysF"/>
</dbReference>
<dbReference type="InterPro" id="IPR051513">
    <property type="entry name" value="Tectonin_beta-propeller"/>
</dbReference>
<dbReference type="PANTHER" id="PTHR23250">
    <property type="entry name" value="DYSFERLIN-RELATED"/>
    <property type="match status" value="1"/>
</dbReference>
<dbReference type="PANTHER" id="PTHR23250:SF1">
    <property type="entry name" value="TECTONIN BETA-PROPELLER REPEAT-CONTAINING PROTEIN 1"/>
    <property type="match status" value="1"/>
</dbReference>
<dbReference type="Pfam" id="PF06462">
    <property type="entry name" value="Hyd_WA"/>
    <property type="match status" value="4"/>
</dbReference>
<dbReference type="Pfam" id="PF06398">
    <property type="entry name" value="Pex24p"/>
    <property type="match status" value="2"/>
</dbReference>
<dbReference type="Pfam" id="PF19193">
    <property type="entry name" value="Tectonin"/>
    <property type="match status" value="1"/>
</dbReference>
<dbReference type="SMART" id="SM00694">
    <property type="entry name" value="DysFC"/>
    <property type="match status" value="2"/>
</dbReference>
<dbReference type="SMART" id="SM00693">
    <property type="entry name" value="DysFN"/>
    <property type="match status" value="2"/>
</dbReference>
<dbReference type="SMART" id="SM00706">
    <property type="entry name" value="TECPR"/>
    <property type="match status" value="11"/>
</dbReference>
<dbReference type="SUPFAM" id="SSF50729">
    <property type="entry name" value="PH domain-like"/>
    <property type="match status" value="1"/>
</dbReference>
<feature type="chain" id="PRO_0000337063" description="Tectonin beta-propeller repeat-containing protein 1">
    <location>
        <begin position="1"/>
        <end position="1166"/>
    </location>
</feature>
<feature type="repeat" description="TECPR 1">
    <location>
        <begin position="209"/>
        <end position="240"/>
    </location>
</feature>
<feature type="repeat" description="TECPR 2">
    <location>
        <begin position="254"/>
        <end position="285"/>
    </location>
</feature>
<feature type="repeat" description="TECPR 3">
    <location>
        <begin position="301"/>
        <end position="332"/>
    </location>
</feature>
<feature type="repeat" description="TECPR 4">
    <location>
        <begin position="344"/>
        <end position="376"/>
    </location>
</feature>
<feature type="domain" description="PH">
    <location>
        <begin position="616"/>
        <end position="722"/>
    </location>
</feature>
<feature type="repeat" description="TECPR 5">
    <location>
        <begin position="734"/>
        <end position="761"/>
    </location>
</feature>
<feature type="repeat" description="TECPR 6">
    <location>
        <begin position="958"/>
        <end position="989"/>
    </location>
</feature>
<feature type="repeat" description="TECPR 7">
    <location>
        <begin position="1003"/>
        <end position="1034"/>
    </location>
</feature>
<feature type="repeat" description="TECPR 8">
    <location>
        <begin position="1049"/>
        <end position="1080"/>
    </location>
</feature>
<feature type="repeat" description="TECPR 9">
    <location>
        <begin position="1092"/>
        <end position="1132"/>
    </location>
</feature>
<feature type="region of interest" description="Disordered" evidence="4">
    <location>
        <begin position="403"/>
        <end position="492"/>
    </location>
</feature>
<feature type="region of interest" description="Disordered" evidence="4">
    <location>
        <begin position="1147"/>
        <end position="1166"/>
    </location>
</feature>
<feature type="compositionally biased region" description="Polar residues" evidence="4">
    <location>
        <begin position="407"/>
        <end position="418"/>
    </location>
</feature>
<feature type="compositionally biased region" description="Basic and acidic residues" evidence="4">
    <location>
        <begin position="420"/>
        <end position="436"/>
    </location>
</feature>
<feature type="compositionally biased region" description="Polar residues" evidence="4">
    <location>
        <begin position="437"/>
        <end position="446"/>
    </location>
</feature>
<feature type="compositionally biased region" description="Basic and acidic residues" evidence="4">
    <location>
        <begin position="447"/>
        <end position="456"/>
    </location>
</feature>
<feature type="modified residue" description="Phosphoserine" evidence="3">
    <location>
        <position position="386"/>
    </location>
</feature>
<feature type="modified residue" description="Phosphoserine" evidence="3">
    <location>
        <position position="388"/>
    </location>
</feature>
<feature type="modified residue" description="Phosphoserine" evidence="3">
    <location>
        <position position="391"/>
    </location>
</feature>
<feature type="modified residue" description="Phosphoserine" evidence="3">
    <location>
        <position position="413"/>
    </location>
</feature>
<feature type="modified residue" description="Phosphoserine" evidence="3">
    <location>
        <position position="418"/>
    </location>
</feature>
<feature type="modified residue" description="Phosphoserine" evidence="2">
    <location>
        <position position="943"/>
    </location>
</feature>
<protein>
    <recommendedName>
        <fullName>Tectonin beta-propeller repeat-containing protein 1</fullName>
    </recommendedName>
</protein>
<evidence type="ECO:0000250" key="1"/>
<evidence type="ECO:0000250" key="2">
    <source>
        <dbReference type="UniProtKB" id="Q7Z6L1"/>
    </source>
</evidence>
<evidence type="ECO:0000250" key="3">
    <source>
        <dbReference type="UniProtKB" id="Q80VP0"/>
    </source>
</evidence>
<evidence type="ECO:0000256" key="4">
    <source>
        <dbReference type="SAM" id="MobiDB-lite"/>
    </source>
</evidence>
<evidence type="ECO:0000305" key="5"/>
<sequence length="1166" mass="130187">MPTSMLWAVDLFGRVYTLSTAGQYWELCKDVQLEFKRVSAATQCCWGIACDNQVYLYVCSSDVPIRHREEAYENQRWNPMGGFCEKLLPSDRWSWSDVSGLQHRPLDGVALPSPYWEWESDWYVDENFGGEPTEKGGWTYAMDFPATYTRDKKWNSCVRRRKWIRYRRYKSRDTWAKIPSKDDPKELPDPFNDLSVGGWEITEEPVGRLSVWAVSLQGKVWYRENVSHPNPEGSSWSLVDTPGEVVQISCGPHDLIWATLWEGQALVREGICRNNPKGNSWSIVEPPGSENGIMHVSAGVSVVWAITKDRKVWFRRGVNSHNPCGTSWIEMVGEMTMVNVGLNDQVWGISCEDRAVYFRQGVTPSELSGKTWKAIVVGRESDRSHSGSSSSLLSAGCFFGEEVRGSGTESAPSDTDASSEVERQGPERSLPKESLDNSRNLKGSSSKGHESTRNTEDPMENACLAEGQAKAPKTSGPDECHGPAPTPAELPWTNIDLKEPKKASNQPAAGFPETSGLSSLGLFPMGMEEPYGADDHPLWAWVSGGGCAVEAGSALKWFTVQSGLSPSVQTLSLSITPAQTAAWRKQIFQQLTERTKRELESFRHYEQAVEQSVWVKTGALQWWCDWKPHKWVDVRVALEQFTGHDGARDSILFIYYVVHEEKKYLHVFLNEVTVLVPVLNEAKHSFALYTPERTRQRWPVRLAATTEQDMNDWLTLLSLSCCESRKVHGRPSLQAIWSVTCKGDIFVSEPSPDLEAHEHLLPCDQMFWRQMGGHLRIIEANSRGVVWGIGYDHTAWVYTGGYGGGCFQGLASSTSNIYTQSDVKSVYIYENQRWNPVTGYTSRGLPTDRYMWSDVTGLQECTKAGTKPPSLQWTWVSDWYVDFSVLGGTDQEGWQYASDFPASYHGYKTMKDFVRRRCWARKCKLVTSGPWLEVAPIALSDVSIIPESADANGRGHNIALWAVSDKGDVLCRLGVSELNPAGSSWLHVGTDQPFASVSIGACYQVWAVARDGSAFYRGSVSPSQPAGDCWYHIPSPPKQKLTQVSVGQTSVYALDENGNLWYRAGITPSYPQGSSWEHVSNNVRKVSVGPLDQVWVIANKVQGSHGLSRGTVCRRMGVQPREPKGQGWDYGIGGGWDHISVRANATRAPRNMSRDQEAHGPGPVCC</sequence>
<name>TCPR1_RAT</name>
<gene>
    <name type="primary">Tecpr1</name>
</gene>
<reference key="1">
    <citation type="journal article" date="2004" name="Genome Res.">
        <title>The status, quality, and expansion of the NIH full-length cDNA project: the Mammalian Gene Collection (MGC).</title>
        <authorList>
            <consortium name="The MGC Project Team"/>
        </authorList>
    </citation>
    <scope>NUCLEOTIDE SEQUENCE [LARGE SCALE MRNA]</scope>
    <source>
        <tissue>Prostate</tissue>
    </source>
</reference>
<organism>
    <name type="scientific">Rattus norvegicus</name>
    <name type="common">Rat</name>
    <dbReference type="NCBI Taxonomy" id="10116"/>
    <lineage>
        <taxon>Eukaryota</taxon>
        <taxon>Metazoa</taxon>
        <taxon>Chordata</taxon>
        <taxon>Craniata</taxon>
        <taxon>Vertebrata</taxon>
        <taxon>Euteleostomi</taxon>
        <taxon>Mammalia</taxon>
        <taxon>Eutheria</taxon>
        <taxon>Euarchontoglires</taxon>
        <taxon>Glires</taxon>
        <taxon>Rodentia</taxon>
        <taxon>Myomorpha</taxon>
        <taxon>Muroidea</taxon>
        <taxon>Muridae</taxon>
        <taxon>Murinae</taxon>
        <taxon>Rattus</taxon>
    </lineage>
</organism>
<accession>Q3ZBA0</accession>
<comment type="function">
    <text evidence="1">Tethering factor involved in autophagy. Involved in autophagosome maturation by promoting the autophagosome fusion with lysosomes: acts by associating with both the ATG5-ATG12 conjugate and phosphatidylinositol-3-phosphate (PtdIns(3)P) present at the surface of autophagosomes. Also involved in selective autophagy against bacterial pathogens, by being required for phagophore/preautophagosomal structure biogenesis and maturation (By similarity).</text>
</comment>
<comment type="subunit">
    <text>Interacts with ATG5; the interaction is direct. Interacts with WIPI2. Interacts with the ATG5-ATG12 conjugate, the interaction is however mutually exclusive with ATG16, since it does not interact with ATG12-ATG5-ATG16 complex.</text>
</comment>
<comment type="subcellular location">
    <subcellularLocation>
        <location evidence="1">Cytoplasmic vesicle</location>
        <location evidence="1">Autophagosome membrane</location>
    </subcellularLocation>
    <subcellularLocation>
        <location evidence="1">Lysosome membrane</location>
    </subcellularLocation>
    <text evidence="1">Localizes to Lysosome membranes, and binds PtdIns(3)P at the surface of autophagosome. Localizes to autolysosomes, a vesicle formed by the fusion between autophagosomes and lysosomes (By similarity).</text>
</comment>
<comment type="domain">
    <text evidence="1">The PH domain mediates the binding to phosphatidylinositol-3-phosphate (PtdIns(3)P).</text>
</comment>
<comment type="similarity">
    <text evidence="5">Belongs to the TECPR1 family.</text>
</comment>